<name>RS11_VIBA3</name>
<protein>
    <recommendedName>
        <fullName evidence="1">Small ribosomal subunit protein uS11</fullName>
    </recommendedName>
    <alternativeName>
        <fullName evidence="2">30S ribosomal protein S11</fullName>
    </alternativeName>
</protein>
<keyword id="KW-0687">Ribonucleoprotein</keyword>
<keyword id="KW-0689">Ribosomal protein</keyword>
<keyword id="KW-0694">RNA-binding</keyword>
<keyword id="KW-0699">rRNA-binding</keyword>
<dbReference type="EMBL" id="FM954972">
    <property type="protein sequence ID" value="CAV20099.1"/>
    <property type="molecule type" value="Genomic_DNA"/>
</dbReference>
<dbReference type="SMR" id="B7VLD4"/>
<dbReference type="STRING" id="575788.VS_2809"/>
<dbReference type="KEGG" id="vsp:VS_2809"/>
<dbReference type="eggNOG" id="COG0100">
    <property type="taxonomic scope" value="Bacteria"/>
</dbReference>
<dbReference type="HOGENOM" id="CLU_072439_5_0_6"/>
<dbReference type="Proteomes" id="UP000009100">
    <property type="component" value="Chromosome 1"/>
</dbReference>
<dbReference type="GO" id="GO:1990904">
    <property type="term" value="C:ribonucleoprotein complex"/>
    <property type="evidence" value="ECO:0007669"/>
    <property type="project" value="UniProtKB-KW"/>
</dbReference>
<dbReference type="GO" id="GO:0005840">
    <property type="term" value="C:ribosome"/>
    <property type="evidence" value="ECO:0007669"/>
    <property type="project" value="UniProtKB-KW"/>
</dbReference>
<dbReference type="GO" id="GO:0019843">
    <property type="term" value="F:rRNA binding"/>
    <property type="evidence" value="ECO:0007669"/>
    <property type="project" value="UniProtKB-UniRule"/>
</dbReference>
<dbReference type="GO" id="GO:0003735">
    <property type="term" value="F:structural constituent of ribosome"/>
    <property type="evidence" value="ECO:0007669"/>
    <property type="project" value="InterPro"/>
</dbReference>
<dbReference type="GO" id="GO:0006412">
    <property type="term" value="P:translation"/>
    <property type="evidence" value="ECO:0007669"/>
    <property type="project" value="UniProtKB-UniRule"/>
</dbReference>
<dbReference type="FunFam" id="3.30.420.80:FF:000001">
    <property type="entry name" value="30S ribosomal protein S11"/>
    <property type="match status" value="1"/>
</dbReference>
<dbReference type="Gene3D" id="3.30.420.80">
    <property type="entry name" value="Ribosomal protein S11"/>
    <property type="match status" value="1"/>
</dbReference>
<dbReference type="HAMAP" id="MF_01310">
    <property type="entry name" value="Ribosomal_uS11"/>
    <property type="match status" value="1"/>
</dbReference>
<dbReference type="InterPro" id="IPR001971">
    <property type="entry name" value="Ribosomal_uS11"/>
</dbReference>
<dbReference type="InterPro" id="IPR019981">
    <property type="entry name" value="Ribosomal_uS11_bac-type"/>
</dbReference>
<dbReference type="InterPro" id="IPR018102">
    <property type="entry name" value="Ribosomal_uS11_CS"/>
</dbReference>
<dbReference type="InterPro" id="IPR036967">
    <property type="entry name" value="Ribosomal_uS11_sf"/>
</dbReference>
<dbReference type="NCBIfam" id="NF003698">
    <property type="entry name" value="PRK05309.1"/>
    <property type="match status" value="1"/>
</dbReference>
<dbReference type="NCBIfam" id="TIGR03632">
    <property type="entry name" value="uS11_bact"/>
    <property type="match status" value="1"/>
</dbReference>
<dbReference type="PANTHER" id="PTHR11759">
    <property type="entry name" value="40S RIBOSOMAL PROTEIN S14/30S RIBOSOMAL PROTEIN S11"/>
    <property type="match status" value="1"/>
</dbReference>
<dbReference type="Pfam" id="PF00411">
    <property type="entry name" value="Ribosomal_S11"/>
    <property type="match status" value="1"/>
</dbReference>
<dbReference type="PIRSF" id="PIRSF002131">
    <property type="entry name" value="Ribosomal_S11"/>
    <property type="match status" value="1"/>
</dbReference>
<dbReference type="SUPFAM" id="SSF53137">
    <property type="entry name" value="Translational machinery components"/>
    <property type="match status" value="1"/>
</dbReference>
<dbReference type="PROSITE" id="PS00054">
    <property type="entry name" value="RIBOSOMAL_S11"/>
    <property type="match status" value="1"/>
</dbReference>
<accession>B7VLD4</accession>
<gene>
    <name evidence="1" type="primary">rpsK</name>
    <name type="ordered locus">VS_2809</name>
</gene>
<proteinExistence type="inferred from homology"/>
<evidence type="ECO:0000255" key="1">
    <source>
        <dbReference type="HAMAP-Rule" id="MF_01310"/>
    </source>
</evidence>
<evidence type="ECO:0000305" key="2"/>
<comment type="function">
    <text evidence="1">Located on the platform of the 30S subunit, it bridges several disparate RNA helices of the 16S rRNA. Forms part of the Shine-Dalgarno cleft in the 70S ribosome.</text>
</comment>
<comment type="subunit">
    <text evidence="1">Part of the 30S ribosomal subunit. Interacts with proteins S7 and S18. Binds to IF-3.</text>
</comment>
<comment type="similarity">
    <text evidence="1">Belongs to the universal ribosomal protein uS11 family.</text>
</comment>
<reference key="1">
    <citation type="submission" date="2009-02" db="EMBL/GenBank/DDBJ databases">
        <title>Vibrio splendidus str. LGP32 complete genome.</title>
        <authorList>
            <person name="Mazel D."/>
            <person name="Le Roux F."/>
        </authorList>
    </citation>
    <scope>NUCLEOTIDE SEQUENCE [LARGE SCALE GENOMIC DNA]</scope>
    <source>
        <strain>LGP32</strain>
    </source>
</reference>
<sequence length="129" mass="13876">MAKQPTRARKRVRKQVADGVAHIHASFNNTIVTITDRQGNALAWATAGGSGFRGSRKSTPFAAQVAAERCGEMAKEYGLKNLEVMVKGPGPGRESTVRALNAAGFRITNIVDATPIPHNGCRPPKKRRV</sequence>
<feature type="chain" id="PRO_1000165581" description="Small ribosomal subunit protein uS11">
    <location>
        <begin position="1"/>
        <end position="129"/>
    </location>
</feature>
<organism>
    <name type="scientific">Vibrio atlanticus (strain LGP32)</name>
    <name type="common">Vibrio splendidus (strain Mel32)</name>
    <dbReference type="NCBI Taxonomy" id="575788"/>
    <lineage>
        <taxon>Bacteria</taxon>
        <taxon>Pseudomonadati</taxon>
        <taxon>Pseudomonadota</taxon>
        <taxon>Gammaproteobacteria</taxon>
        <taxon>Vibrionales</taxon>
        <taxon>Vibrionaceae</taxon>
        <taxon>Vibrio</taxon>
    </lineage>
</organism>